<gene>
    <name evidence="9" type="primary">FCGR1BP</name>
    <name type="synonym">FCGR1B</name>
    <name type="synonym">IGFRB</name>
</gene>
<dbReference type="EMBL" id="L03419">
    <property type="protein sequence ID" value="AAA35825.1"/>
    <property type="molecule type" value="mRNA"/>
</dbReference>
<dbReference type="EMBL" id="L03420">
    <property type="protein sequence ID" value="AAA35826.1"/>
    <property type="molecule type" value="mRNA"/>
</dbReference>
<dbReference type="EMBL" id="S45709">
    <property type="protein sequence ID" value="AAD13842.1"/>
    <property type="molecule type" value="Genomic_DNA"/>
</dbReference>
<dbReference type="EMBL" id="S45704">
    <property type="protein sequence ID" value="AAD13842.1"/>
    <property type="status" value="JOINED"/>
    <property type="molecule type" value="Genomic_DNA"/>
</dbReference>
<dbReference type="EMBL" id="S45705">
    <property type="protein sequence ID" value="AAD13842.1"/>
    <property type="status" value="JOINED"/>
    <property type="molecule type" value="Genomic_DNA"/>
</dbReference>
<dbReference type="EMBL" id="S45707">
    <property type="protein sequence ID" value="AAD13842.1"/>
    <property type="status" value="JOINED"/>
    <property type="molecule type" value="Genomic_DNA"/>
</dbReference>
<dbReference type="EMBL" id="S45708">
    <property type="protein sequence ID" value="AAD13842.1"/>
    <property type="status" value="JOINED"/>
    <property type="molecule type" value="Genomic_DNA"/>
</dbReference>
<dbReference type="EMBL" id="AL357493">
    <property type="status" value="NOT_ANNOTATED_CDS"/>
    <property type="molecule type" value="Genomic_DNA"/>
</dbReference>
<dbReference type="PIR" id="I55577">
    <property type="entry name" value="I55577"/>
</dbReference>
<dbReference type="RefSeq" id="NP_001004340.2">
    <property type="nucleotide sequence ID" value="NM_001004340.3"/>
</dbReference>
<dbReference type="RefSeq" id="NP_001017986.1">
    <property type="nucleotide sequence ID" value="NM_001017986.3"/>
</dbReference>
<dbReference type="RefSeq" id="NP_001231839.1">
    <property type="nucleotide sequence ID" value="NM_001244910.1"/>
</dbReference>
<dbReference type="EMDB" id="EMD-36940"/>
<dbReference type="SMR" id="Q92637"/>
<dbReference type="BioGRID" id="108504">
    <property type="interactions" value="4"/>
</dbReference>
<dbReference type="FunCoup" id="Q92637">
    <property type="interactions" value="5"/>
</dbReference>
<dbReference type="STRING" id="9606.ENSP00000358391"/>
<dbReference type="DrugBank" id="DB00028">
    <property type="generic name" value="Human immunoglobulin G"/>
</dbReference>
<dbReference type="GlyCosmos" id="Q92637">
    <property type="glycosylation" value="3 sites, No reported glycans"/>
</dbReference>
<dbReference type="GlyGen" id="Q92637">
    <property type="glycosylation" value="3 sites"/>
</dbReference>
<dbReference type="iPTMnet" id="Q92637"/>
<dbReference type="PhosphoSitePlus" id="Q92637"/>
<dbReference type="BioMuta" id="FCGR1B"/>
<dbReference type="DMDM" id="74760649"/>
<dbReference type="MassIVE" id="Q92637"/>
<dbReference type="PaxDb" id="9606-ENSP00000358391"/>
<dbReference type="PeptideAtlas" id="Q92637"/>
<dbReference type="ProteomicsDB" id="75392">
    <molecule id="Q92637-1"/>
</dbReference>
<dbReference type="ProteomicsDB" id="75393">
    <molecule id="Q92637-2"/>
</dbReference>
<dbReference type="ProteomicsDB" id="75394">
    <molecule id="Q92637-3"/>
</dbReference>
<dbReference type="Antibodypedia" id="53772">
    <property type="antibodies" value="69 antibodies from 15 providers"/>
</dbReference>
<dbReference type="DNASU" id="2210"/>
<dbReference type="UCSC" id="uc031upv.2">
    <molecule id="Q92637-1"/>
    <property type="organism name" value="human"/>
</dbReference>
<dbReference type="AGR" id="HGNC:3614"/>
<dbReference type="GeneCards" id="FCGR1BP"/>
<dbReference type="HGNC" id="HGNC:3614">
    <property type="gene designation" value="FCGR1BP"/>
</dbReference>
<dbReference type="MIM" id="601502">
    <property type="type" value="gene"/>
</dbReference>
<dbReference type="neXtProt" id="NX_Q92637"/>
<dbReference type="VEuPathDB" id="HostDB:ENSG00000198019"/>
<dbReference type="eggNOG" id="ENOG502S1XR">
    <property type="taxonomic scope" value="Eukaryota"/>
</dbReference>
<dbReference type="HOGENOM" id="CLU_124507_0_0_1"/>
<dbReference type="InParanoid" id="Q92637"/>
<dbReference type="OrthoDB" id="9950534at2759"/>
<dbReference type="PAN-GO" id="Q92637">
    <property type="GO annotations" value="4 GO annotations based on evolutionary models"/>
</dbReference>
<dbReference type="PhylomeDB" id="Q92637"/>
<dbReference type="TreeFam" id="TF335097"/>
<dbReference type="PathwayCommons" id="Q92637"/>
<dbReference type="Reactome" id="R-HSA-1236978">
    <property type="pathway name" value="Cross-presentation of soluble exogenous antigens (endosomes)"/>
</dbReference>
<dbReference type="Reactome" id="R-HSA-877300">
    <property type="pathway name" value="Interferon gamma signaling"/>
</dbReference>
<dbReference type="BioGRID-ORCS" id="2210">
    <property type="hits" value="272 hits in 1048 CRISPR screens"/>
</dbReference>
<dbReference type="GenomeRNAi" id="2210"/>
<dbReference type="Pharos" id="Q92637">
    <property type="development level" value="Tbio"/>
</dbReference>
<dbReference type="PRO" id="PR:Q92637"/>
<dbReference type="Proteomes" id="UP000005640">
    <property type="component" value="Chromosome 1"/>
</dbReference>
<dbReference type="RNAct" id="Q92637">
    <property type="molecule type" value="protein"/>
</dbReference>
<dbReference type="Bgee" id="ENSG00000198019">
    <property type="expression patterns" value="Expressed in monocyte and 101 other cell types or tissues"/>
</dbReference>
<dbReference type="ExpressionAtlas" id="Q92637">
    <property type="expression patterns" value="baseline and differential"/>
</dbReference>
<dbReference type="GO" id="GO:0030669">
    <property type="term" value="C:clathrin-coated endocytic vesicle membrane"/>
    <property type="evidence" value="ECO:0000304"/>
    <property type="project" value="Reactome"/>
</dbReference>
<dbReference type="GO" id="GO:0031901">
    <property type="term" value="C:early endosome membrane"/>
    <property type="evidence" value="ECO:0000304"/>
    <property type="project" value="Reactome"/>
</dbReference>
<dbReference type="GO" id="GO:0009897">
    <property type="term" value="C:external side of plasma membrane"/>
    <property type="evidence" value="ECO:0000318"/>
    <property type="project" value="GO_Central"/>
</dbReference>
<dbReference type="GO" id="GO:0005886">
    <property type="term" value="C:plasma membrane"/>
    <property type="evidence" value="ECO:0000304"/>
    <property type="project" value="Reactome"/>
</dbReference>
<dbReference type="GO" id="GO:0019864">
    <property type="term" value="F:IgG binding"/>
    <property type="evidence" value="ECO:0000318"/>
    <property type="project" value="GO_Central"/>
</dbReference>
<dbReference type="GO" id="GO:0019770">
    <property type="term" value="F:IgG receptor activity"/>
    <property type="evidence" value="ECO:0000318"/>
    <property type="project" value="GO_Central"/>
</dbReference>
<dbReference type="GO" id="GO:0019763">
    <property type="term" value="F:immunoglobulin receptor activity"/>
    <property type="evidence" value="ECO:0000303"/>
    <property type="project" value="UniProtKB"/>
</dbReference>
<dbReference type="GO" id="GO:0001788">
    <property type="term" value="P:antibody-dependent cellular cytotoxicity"/>
    <property type="evidence" value="ECO:0000318"/>
    <property type="project" value="GO_Central"/>
</dbReference>
<dbReference type="GO" id="GO:0007166">
    <property type="term" value="P:cell surface receptor signaling pathway"/>
    <property type="evidence" value="ECO:0000318"/>
    <property type="project" value="GO_Central"/>
</dbReference>
<dbReference type="GO" id="GO:0006955">
    <property type="term" value="P:immune response"/>
    <property type="evidence" value="ECO:0000303"/>
    <property type="project" value="UniProtKB"/>
</dbReference>
<dbReference type="GO" id="GO:0050766">
    <property type="term" value="P:positive regulation of phagocytosis"/>
    <property type="evidence" value="ECO:0000318"/>
    <property type="project" value="GO_Central"/>
</dbReference>
<dbReference type="GO" id="GO:0032760">
    <property type="term" value="P:positive regulation of tumor necrosis factor production"/>
    <property type="evidence" value="ECO:0000318"/>
    <property type="project" value="GO_Central"/>
</dbReference>
<dbReference type="CDD" id="cd05752">
    <property type="entry name" value="Ig1_FcgammaR_like"/>
    <property type="match status" value="1"/>
</dbReference>
<dbReference type="CDD" id="cd05753">
    <property type="entry name" value="Ig2_FcgammaR_like"/>
    <property type="match status" value="1"/>
</dbReference>
<dbReference type="FunFam" id="2.60.40.10:FF:000217">
    <property type="entry name" value="High affinity immunoglobulin gamma Fc receptor I"/>
    <property type="match status" value="1"/>
</dbReference>
<dbReference type="FunFam" id="2.60.40.10:FF:000356">
    <property type="entry name" value="Low affinity immunoglobulin gamma Fc region receptor III-A"/>
    <property type="match status" value="1"/>
</dbReference>
<dbReference type="Gene3D" id="2.60.40.10">
    <property type="entry name" value="Immunoglobulins"/>
    <property type="match status" value="2"/>
</dbReference>
<dbReference type="InterPro" id="IPR007110">
    <property type="entry name" value="Ig-like_dom"/>
</dbReference>
<dbReference type="InterPro" id="IPR036179">
    <property type="entry name" value="Ig-like_dom_sf"/>
</dbReference>
<dbReference type="InterPro" id="IPR013783">
    <property type="entry name" value="Ig-like_fold"/>
</dbReference>
<dbReference type="InterPro" id="IPR050488">
    <property type="entry name" value="Ig_Fc_receptor"/>
</dbReference>
<dbReference type="InterPro" id="IPR003599">
    <property type="entry name" value="Ig_sub"/>
</dbReference>
<dbReference type="InterPro" id="IPR003598">
    <property type="entry name" value="Ig_sub2"/>
</dbReference>
<dbReference type="PANTHER" id="PTHR11481:SF11">
    <property type="entry name" value="HIGH AFFINITY IMMUNOGLOBULIN GAMMA FC RECEPTOR I-RELATED"/>
    <property type="match status" value="1"/>
</dbReference>
<dbReference type="PANTHER" id="PTHR11481">
    <property type="entry name" value="IMMUNOGLOBULIN FC RECEPTOR"/>
    <property type="match status" value="1"/>
</dbReference>
<dbReference type="Pfam" id="PF13895">
    <property type="entry name" value="Ig_2"/>
    <property type="match status" value="1"/>
</dbReference>
<dbReference type="Pfam" id="PF13927">
    <property type="entry name" value="Ig_3"/>
    <property type="match status" value="1"/>
</dbReference>
<dbReference type="SMART" id="SM00409">
    <property type="entry name" value="IG"/>
    <property type="match status" value="2"/>
</dbReference>
<dbReference type="SMART" id="SM00408">
    <property type="entry name" value="IGc2"/>
    <property type="match status" value="2"/>
</dbReference>
<dbReference type="SUPFAM" id="SSF48726">
    <property type="entry name" value="Immunoglobulin"/>
    <property type="match status" value="2"/>
</dbReference>
<dbReference type="PROSITE" id="PS50835">
    <property type="entry name" value="IG_LIKE"/>
    <property type="match status" value="2"/>
</dbReference>
<feature type="signal peptide" evidence="1">
    <location>
        <begin position="1"/>
        <end position="15"/>
    </location>
</feature>
<feature type="chain" id="PRO_0000331462" description="Putative high affinity immunoglobulin gamma Fc receptor IB">
    <location>
        <begin position="16"/>
        <end position="280"/>
    </location>
</feature>
<feature type="topological domain" description="Extracellular" evidence="1">
    <location>
        <begin position="16"/>
        <end position="198"/>
    </location>
</feature>
<feature type="transmembrane region" description="Helical" evidence="1">
    <location>
        <begin position="199"/>
        <end position="219"/>
    </location>
</feature>
<feature type="topological domain" description="Cytoplasmic" evidence="1">
    <location>
        <begin position="220"/>
        <end position="280"/>
    </location>
</feature>
<feature type="domain" description="Ig-like C2-type 1">
    <location>
        <begin position="22"/>
        <end position="101"/>
    </location>
</feature>
<feature type="domain" description="Ig-like C2-type 2">
    <location>
        <begin position="95"/>
        <end position="184"/>
    </location>
</feature>
<feature type="region of interest" description="Disordered" evidence="3">
    <location>
        <begin position="258"/>
        <end position="280"/>
    </location>
</feature>
<feature type="glycosylation site" description="N-linked (GlcNAc...) asparagine" evidence="1">
    <location>
        <position position="59"/>
    </location>
</feature>
<feature type="glycosylation site" description="N-linked (GlcNAc...) asparagine" evidence="1">
    <location>
        <position position="152"/>
    </location>
</feature>
<feature type="glycosylation site" description="N-linked (GlcNAc...) asparagine" evidence="1">
    <location>
        <position position="163"/>
    </location>
</feature>
<feature type="disulfide bond" evidence="2">
    <location>
        <begin position="43"/>
        <end position="85"/>
    </location>
</feature>
<feature type="disulfide bond" evidence="2">
    <location>
        <begin position="124"/>
        <end position="168"/>
    </location>
</feature>
<feature type="splice variant" id="VSP_033215" description="In isoform 3." evidence="7">
    <location>
        <begin position="11"/>
        <end position="102"/>
    </location>
</feature>
<feature type="splice variant" id="VSP_033216" description="In isoform 2." evidence="8">
    <original>GLQLPTPVWFHVLFYLAVGIMFLVNTVLWVTIRKEL</original>
    <variation>ELFPAPVLNASVTSPLLEGNLVTLSCETKLLLQRPGL</variation>
    <location>
        <begin position="188"/>
        <end position="223"/>
    </location>
</feature>
<feature type="splice variant" id="VSP_033217" description="In isoform 2." evidence="8">
    <location>
        <begin position="224"/>
        <end position="280"/>
    </location>
</feature>
<feature type="sequence conflict" description="In Ref. 1; AAA35826." evidence="8" ref="1">
    <original>T</original>
    <variation>A</variation>
    <location>
        <position position="154"/>
    </location>
</feature>
<accession>Q92637</accession>
<accession>Q7KZ13</accession>
<accession>Q92638</accession>
<comment type="function">
    <text evidence="5 6">May bind to the Fc region of immunoglobulins gamma with a low affinity compared to FCGR1A. May function in the humoral immune response.</text>
</comment>
<comment type="subcellular location">
    <subcellularLocation>
        <location evidence="5">Cell membrane</location>
        <topology evidence="5">Single-pass type I membrane protein</topology>
    </subcellularLocation>
</comment>
<comment type="alternative products">
    <event type="alternative splicing"/>
    <isoform>
        <id>Q92637-1</id>
        <name>1</name>
        <name>b2</name>
        <sequence type="displayed"/>
    </isoform>
    <isoform>
        <id>Q92637-2</id>
        <name>2</name>
        <sequence type="described" ref="VSP_033216 VSP_033217"/>
    </isoform>
    <isoform>
        <id>Q92637-3</id>
        <name>3</name>
        <name>b3</name>
        <sequence type="described" ref="VSP_033215"/>
    </isoform>
</comment>
<comment type="induction">
    <text evidence="4 5">Up-regulated by IFNG/IFN-gamma.</text>
</comment>
<comment type="similarity">
    <text evidence="8">Belongs to the immunoglobulin superfamily. FCGR1 family.</text>
</comment>
<comment type="caution">
    <text evidence="8">Could be the product of a pseudogene.</text>
</comment>
<organism>
    <name type="scientific">Homo sapiens</name>
    <name type="common">Human</name>
    <dbReference type="NCBI Taxonomy" id="9606"/>
    <lineage>
        <taxon>Eukaryota</taxon>
        <taxon>Metazoa</taxon>
        <taxon>Chordata</taxon>
        <taxon>Craniata</taxon>
        <taxon>Vertebrata</taxon>
        <taxon>Euteleostomi</taxon>
        <taxon>Mammalia</taxon>
        <taxon>Eutheria</taxon>
        <taxon>Euarchontoglires</taxon>
        <taxon>Primates</taxon>
        <taxon>Haplorrhini</taxon>
        <taxon>Catarrhini</taxon>
        <taxon>Hominidae</taxon>
        <taxon>Homo</taxon>
    </lineage>
</organism>
<protein>
    <recommendedName>
        <fullName>Putative high affinity immunoglobulin gamma Fc receptor IB</fullName>
        <shortName>IgG Fc receptor IB</shortName>
    </recommendedName>
    <alternativeName>
        <fullName evidence="9">Fc gamma receptor IB pseudogene</fullName>
    </alternativeName>
    <alternativeName>
        <fullName>Fc-gamma RIB</fullName>
        <shortName>FcRIB</shortName>
        <shortName>hFcgammaRIB</shortName>
    </alternativeName>
</protein>
<reference key="1">
    <citation type="journal article" date="1992" name="J. Clin. Invest.">
        <title>Novel Fc gamma receptor I family gene products in human mononuclear cells.</title>
        <authorList>
            <person name="Porges A.J."/>
            <person name="Redecha P.B."/>
            <person name="Doebele R."/>
            <person name="Pan L.C."/>
            <person name="Salmon J.E."/>
            <person name="Kimberly R.P."/>
        </authorList>
    </citation>
    <scope>NUCLEOTIDE SEQUENCE [MRNA] (ISOFORMS 1 AND 3)</scope>
    <scope>FUNCTION</scope>
    <scope>SUBCELLULAR LOCATION</scope>
    <scope>INDUCTION BY IFNG</scope>
    <source>
        <tissue>Blood</tissue>
    </source>
</reference>
<reference key="2">
    <citation type="journal article" date="1992" name="J. Exp. Med.">
        <title>Definition of interferon gamma-response elements in a novel human Fc gamma receptor gene (Fc gamma RIb) and characterization of the gene structure.</title>
        <authorList>
            <person name="Benech P.D."/>
            <person name="Sastry K.N."/>
            <person name="Iyer R.R."/>
            <person name="Eichbaum Q.G."/>
            <person name="Raveh D.P."/>
            <person name="Ezekowitz R.A."/>
        </authorList>
    </citation>
    <scope>NUCLEOTIDE SEQUENCE [GENOMIC DNA]</scope>
    <scope>INDUCTION BY IFNG</scope>
</reference>
<reference key="3">
    <citation type="journal article" date="2006" name="Nature">
        <title>The DNA sequence and biological annotation of human chromosome 1.</title>
        <authorList>
            <person name="Gregory S.G."/>
            <person name="Barlow K.F."/>
            <person name="McLay K.E."/>
            <person name="Kaul R."/>
            <person name="Swarbreck D."/>
            <person name="Dunham A."/>
            <person name="Scott C.E."/>
            <person name="Howe K.L."/>
            <person name="Woodfine K."/>
            <person name="Spencer C.C.A."/>
            <person name="Jones M.C."/>
            <person name="Gillson C."/>
            <person name="Searle S."/>
            <person name="Zhou Y."/>
            <person name="Kokocinski F."/>
            <person name="McDonald L."/>
            <person name="Evans R."/>
            <person name="Phillips K."/>
            <person name="Atkinson A."/>
            <person name="Cooper R."/>
            <person name="Jones C."/>
            <person name="Hall R.E."/>
            <person name="Andrews T.D."/>
            <person name="Lloyd C."/>
            <person name="Ainscough R."/>
            <person name="Almeida J.P."/>
            <person name="Ambrose K.D."/>
            <person name="Anderson F."/>
            <person name="Andrew R.W."/>
            <person name="Ashwell R.I.S."/>
            <person name="Aubin K."/>
            <person name="Babbage A.K."/>
            <person name="Bagguley C.L."/>
            <person name="Bailey J."/>
            <person name="Beasley H."/>
            <person name="Bethel G."/>
            <person name="Bird C.P."/>
            <person name="Bray-Allen S."/>
            <person name="Brown J.Y."/>
            <person name="Brown A.J."/>
            <person name="Buckley D."/>
            <person name="Burton J."/>
            <person name="Bye J."/>
            <person name="Carder C."/>
            <person name="Chapman J.C."/>
            <person name="Clark S.Y."/>
            <person name="Clarke G."/>
            <person name="Clee C."/>
            <person name="Cobley V."/>
            <person name="Collier R.E."/>
            <person name="Corby N."/>
            <person name="Coville G.J."/>
            <person name="Davies J."/>
            <person name="Deadman R."/>
            <person name="Dunn M."/>
            <person name="Earthrowl M."/>
            <person name="Ellington A.G."/>
            <person name="Errington H."/>
            <person name="Frankish A."/>
            <person name="Frankland J."/>
            <person name="French L."/>
            <person name="Garner P."/>
            <person name="Garnett J."/>
            <person name="Gay L."/>
            <person name="Ghori M.R.J."/>
            <person name="Gibson R."/>
            <person name="Gilby L.M."/>
            <person name="Gillett W."/>
            <person name="Glithero R.J."/>
            <person name="Grafham D.V."/>
            <person name="Griffiths C."/>
            <person name="Griffiths-Jones S."/>
            <person name="Grocock R."/>
            <person name="Hammond S."/>
            <person name="Harrison E.S.I."/>
            <person name="Hart E."/>
            <person name="Haugen E."/>
            <person name="Heath P.D."/>
            <person name="Holmes S."/>
            <person name="Holt K."/>
            <person name="Howden P.J."/>
            <person name="Hunt A.R."/>
            <person name="Hunt S.E."/>
            <person name="Hunter G."/>
            <person name="Isherwood J."/>
            <person name="James R."/>
            <person name="Johnson C."/>
            <person name="Johnson D."/>
            <person name="Joy A."/>
            <person name="Kay M."/>
            <person name="Kershaw J.K."/>
            <person name="Kibukawa M."/>
            <person name="Kimberley A.M."/>
            <person name="King A."/>
            <person name="Knights A.J."/>
            <person name="Lad H."/>
            <person name="Laird G."/>
            <person name="Lawlor S."/>
            <person name="Leongamornlert D.A."/>
            <person name="Lloyd D.M."/>
            <person name="Loveland J."/>
            <person name="Lovell J."/>
            <person name="Lush M.J."/>
            <person name="Lyne R."/>
            <person name="Martin S."/>
            <person name="Mashreghi-Mohammadi M."/>
            <person name="Matthews L."/>
            <person name="Matthews N.S.W."/>
            <person name="McLaren S."/>
            <person name="Milne S."/>
            <person name="Mistry S."/>
            <person name="Moore M.J.F."/>
            <person name="Nickerson T."/>
            <person name="O'Dell C.N."/>
            <person name="Oliver K."/>
            <person name="Palmeiri A."/>
            <person name="Palmer S.A."/>
            <person name="Parker A."/>
            <person name="Patel D."/>
            <person name="Pearce A.V."/>
            <person name="Peck A.I."/>
            <person name="Pelan S."/>
            <person name="Phelps K."/>
            <person name="Phillimore B.J."/>
            <person name="Plumb R."/>
            <person name="Rajan J."/>
            <person name="Raymond C."/>
            <person name="Rouse G."/>
            <person name="Saenphimmachak C."/>
            <person name="Sehra H.K."/>
            <person name="Sheridan E."/>
            <person name="Shownkeen R."/>
            <person name="Sims S."/>
            <person name="Skuce C.D."/>
            <person name="Smith M."/>
            <person name="Steward C."/>
            <person name="Subramanian S."/>
            <person name="Sycamore N."/>
            <person name="Tracey A."/>
            <person name="Tromans A."/>
            <person name="Van Helmond Z."/>
            <person name="Wall M."/>
            <person name="Wallis J.M."/>
            <person name="White S."/>
            <person name="Whitehead S.L."/>
            <person name="Wilkinson J.E."/>
            <person name="Willey D.L."/>
            <person name="Williams H."/>
            <person name="Wilming L."/>
            <person name="Wray P.W."/>
            <person name="Wu Z."/>
            <person name="Coulson A."/>
            <person name="Vaudin M."/>
            <person name="Sulston J.E."/>
            <person name="Durbin R.M."/>
            <person name="Hubbard T."/>
            <person name="Wooster R."/>
            <person name="Dunham I."/>
            <person name="Carter N.P."/>
            <person name="McVean G."/>
            <person name="Ross M.T."/>
            <person name="Harrow J."/>
            <person name="Olson M.V."/>
            <person name="Beck S."/>
            <person name="Rogers J."/>
            <person name="Bentley D.R."/>
        </authorList>
    </citation>
    <scope>NUCLEOTIDE SEQUENCE [LARGE SCALE GENOMIC DNA]</scope>
</reference>
<reference key="4">
    <citation type="journal article" date="1996" name="Cytogenet. Cell Genet.">
        <title>The three genes of the human FCGR1 gene family encoding Fc gamma RI flank the centromere of chromosome 1 at 1p12 and 1q21.</title>
        <authorList>
            <person name="Maresco D.L."/>
            <person name="Chang E."/>
            <person name="Theil K.S."/>
            <person name="Francke U."/>
            <person name="Anderson C.L."/>
        </authorList>
    </citation>
    <scope>IDENTIFICATION</scope>
</reference>
<reference key="5">
    <citation type="journal article" date="1998" name="Mol. Immunol.">
        <title>Molecular characterization of six variant Fcgamma receptor class I (CD64) transcripts.</title>
        <authorList>
            <person name="Ernst L.K."/>
            <person name="Duchemin A.-M."/>
            <person name="Miller K.L."/>
            <person name="Anderson C.L."/>
        </authorList>
    </citation>
    <scope>FUNCTION</scope>
    <scope>ALTERNATIVE SPLICING</scope>
</reference>
<name>FCGRB_HUMAN</name>
<sequence length="280" mass="32232">MWFLTTLLLWVPVDGQVDTTKAVITLQPPWVSVFQEETVTLHCEVLHLPGSSSTQWFLNGTATQTSTPSYRITSASVNDSGEYRCQRGLSGRSDPIQLEIHRGWLLLQVSSRVFMEGEPLALRCHAWKDKLVYNVLYYRNGKAFKFFHWNSNLTILKTNISHNGTYHCSGMGKHRYTSAGISQYTVKGLQLPTPVWFHVLFYLAVGIMFLVNTVLWVTIRKELKRKKKWNLEISLDSGHEKKVISSLQEDRHLEEELKCQEQKEEQLQEGVHRKEPQGAT</sequence>
<keyword id="KW-1064">Adaptive immunity</keyword>
<keyword id="KW-0025">Alternative splicing</keyword>
<keyword id="KW-1003">Cell membrane</keyword>
<keyword id="KW-1015">Disulfide bond</keyword>
<keyword id="KW-0325">Glycoprotein</keyword>
<keyword id="KW-0390">IgG-binding protein</keyword>
<keyword id="KW-0391">Immunity</keyword>
<keyword id="KW-0393">Immunoglobulin domain</keyword>
<keyword id="KW-0472">Membrane</keyword>
<keyword id="KW-1267">Proteomics identification</keyword>
<keyword id="KW-0675">Receptor</keyword>
<keyword id="KW-1185">Reference proteome</keyword>
<keyword id="KW-0677">Repeat</keyword>
<keyword id="KW-0732">Signal</keyword>
<keyword id="KW-0812">Transmembrane</keyword>
<keyword id="KW-1133">Transmembrane helix</keyword>
<evidence type="ECO:0000255" key="1"/>
<evidence type="ECO:0000255" key="2">
    <source>
        <dbReference type="PROSITE-ProRule" id="PRU00114"/>
    </source>
</evidence>
<evidence type="ECO:0000256" key="3">
    <source>
        <dbReference type="SAM" id="MobiDB-lite"/>
    </source>
</evidence>
<evidence type="ECO:0000269" key="4">
    <source>
    </source>
</evidence>
<evidence type="ECO:0000269" key="5">
    <source>
    </source>
</evidence>
<evidence type="ECO:0000269" key="6">
    <source>
    </source>
</evidence>
<evidence type="ECO:0000303" key="7">
    <source>
    </source>
</evidence>
<evidence type="ECO:0000305" key="8"/>
<evidence type="ECO:0000312" key="9">
    <source>
        <dbReference type="HGNC" id="HGNC:3614"/>
    </source>
</evidence>
<proteinExistence type="uncertain"/>